<protein>
    <recommendedName>
        <fullName>Methylmalonyl-CoA mutase homolog</fullName>
    </recommendedName>
</protein>
<feature type="chain" id="PRO_0000194278" description="Methylmalonyl-CoA mutase homolog">
    <location>
        <begin position="1"/>
        <end position="147"/>
    </location>
</feature>
<organism>
    <name type="scientific">Alkalihalophilus pseudofirmus (strain ATCC BAA-2126 / JCM 17055 / OF4)</name>
    <name type="common">Bacillus pseudofirmus</name>
    <dbReference type="NCBI Taxonomy" id="398511"/>
    <lineage>
        <taxon>Bacteria</taxon>
        <taxon>Bacillati</taxon>
        <taxon>Bacillota</taxon>
        <taxon>Bacilli</taxon>
        <taxon>Bacillales</taxon>
        <taxon>Bacillaceae</taxon>
        <taxon>Alkalihalophilus</taxon>
    </lineage>
</organism>
<comment type="similarity">
    <text evidence="1">To methylmalonyl-CoA mutase.</text>
</comment>
<comment type="caution">
    <text evidence="1">The DNA coding for this protein is not found in the complete genome of strain OF4.</text>
</comment>
<sequence>MRNFGIILAHTYKNRLMSKAFLISTVITLAFMLVLTNMDPYVNMLRGTSEAFSAAVAGADSIQVSPFDEPIQPSTSFSRRIARNTSLILMEESHLAATQDASGGAWYVEHLTDEIIVCKFKVILILNSVREYTDVIADSIFKLSRGH</sequence>
<accession>P26947</accession>
<proteinExistence type="predicted"/>
<name>MUTX_ALKPO</name>
<dbReference type="EMBL" id="X59424">
    <property type="protein sequence ID" value="CAA42057.1"/>
    <property type="molecule type" value="Genomic_DNA"/>
</dbReference>
<dbReference type="PIR" id="S15487">
    <property type="entry name" value="S15487"/>
</dbReference>
<dbReference type="SMR" id="P26947"/>
<dbReference type="STRING" id="398511.BpOF4_02445"/>
<dbReference type="GO" id="GO:0005737">
    <property type="term" value="C:cytoplasm"/>
    <property type="evidence" value="ECO:0007669"/>
    <property type="project" value="TreeGrafter"/>
</dbReference>
<dbReference type="GO" id="GO:0031419">
    <property type="term" value="F:cobalamin binding"/>
    <property type="evidence" value="ECO:0007669"/>
    <property type="project" value="InterPro"/>
</dbReference>
<dbReference type="GO" id="GO:0004494">
    <property type="term" value="F:methylmalonyl-CoA mutase activity"/>
    <property type="evidence" value="ECO:0007669"/>
    <property type="project" value="TreeGrafter"/>
</dbReference>
<dbReference type="GO" id="GO:0019678">
    <property type="term" value="P:propionate metabolic process, methylmalonyl pathway"/>
    <property type="evidence" value="ECO:0007669"/>
    <property type="project" value="TreeGrafter"/>
</dbReference>
<dbReference type="Gene3D" id="3.20.20.240">
    <property type="entry name" value="Methylmalonyl-CoA mutase"/>
    <property type="match status" value="1"/>
</dbReference>
<dbReference type="InterPro" id="IPR016176">
    <property type="entry name" value="Cbl-dep_enz_cat"/>
</dbReference>
<dbReference type="InterPro" id="IPR006099">
    <property type="entry name" value="MeMalonylCoA_mutase_a/b_cat"/>
</dbReference>
<dbReference type="PANTHER" id="PTHR48101:SF4">
    <property type="entry name" value="METHYLMALONYL-COA MUTASE, MITOCHONDRIAL"/>
    <property type="match status" value="1"/>
</dbReference>
<dbReference type="PANTHER" id="PTHR48101">
    <property type="entry name" value="METHYLMALONYL-COA MUTASE, MITOCHONDRIAL-RELATED"/>
    <property type="match status" value="1"/>
</dbReference>
<dbReference type="Pfam" id="PF01642">
    <property type="entry name" value="MM_CoA_mutase"/>
    <property type="match status" value="1"/>
</dbReference>
<dbReference type="SUPFAM" id="SSF51703">
    <property type="entry name" value="Cobalamin (vitamin B12)-dependent enzymes"/>
    <property type="match status" value="1"/>
</dbReference>
<reference key="1">
    <citation type="submission" date="1991-05" db="EMBL/GenBank/DDBJ databases">
        <authorList>
            <person name="Ivey D.M."/>
            <person name="Krulwich T.A."/>
            <person name="Padan E."/>
        </authorList>
    </citation>
    <scope>NUCLEOTIDE SEQUENCE [GENOMIC DNA]</scope>
</reference>
<evidence type="ECO:0000305" key="1"/>